<gene>
    <name type="ordered locus">MIMI_R510</name>
</gene>
<organism>
    <name type="scientific">Acanthamoeba polyphaga mimivirus</name>
    <name type="common">APMV</name>
    <dbReference type="NCBI Taxonomy" id="212035"/>
    <lineage>
        <taxon>Viruses</taxon>
        <taxon>Varidnaviria</taxon>
        <taxon>Bamfordvirae</taxon>
        <taxon>Nucleocytoviricota</taxon>
        <taxon>Megaviricetes</taxon>
        <taxon>Imitervirales</taxon>
        <taxon>Mimiviridae</taxon>
        <taxon>Megamimivirinae</taxon>
        <taxon>Mimivirus</taxon>
        <taxon>Mimivirus bradfordmassiliense</taxon>
    </lineage>
</organism>
<keyword id="KW-0067">ATP-binding</keyword>
<keyword id="KW-0235">DNA replication</keyword>
<keyword id="KW-0547">Nucleotide-binding</keyword>
<keyword id="KW-1185">Reference proteome</keyword>
<sequence length="363" mass="41602">MIDDESVPWIEKYRPKKLEDITQSQNLLDLFKNSTKKGEMTHFLFYGPPGTGKTSAILAMGREIFKEHFQNRVIEFNASDDRGINAVREKITNEAKKYVAEIKLEDGTIIPSYKIIILDEADSMTDEAQDALRVIIEQYSTATRFCFICNYITKITDAIKSRCSSVYFKKLSDECMVEKLNDISLKESMELPKNILHTIIDVSNGDMRKAIMLLQNFKYTYNFKKNLTKKLKDMTLLELKTILFMTKKSSITSTISEEDVYEISASITLDKAKGIIDDTIDCNNIVEVSNLSKKIIAMGFPIDNILTQLNKCILESNKLDVNQISKIIIYSGDILLKMKECGNEYIQLLNYLAYVNRVSKHFD</sequence>
<protein>
    <recommendedName>
        <fullName>Putative replication factor C small subunit L510</fullName>
        <shortName>RFC small subunit L510</shortName>
    </recommendedName>
    <alternativeName>
        <fullName>Clamp loader small subunit L510</fullName>
    </alternativeName>
</protein>
<evidence type="ECO:0000250" key="1"/>
<evidence type="ECO:0000255" key="2"/>
<evidence type="ECO:0000305" key="3"/>
<feature type="chain" id="PRO_0000244641" description="Putative replication factor C small subunit L510">
    <location>
        <begin position="1"/>
        <end position="363"/>
    </location>
</feature>
<feature type="binding site" evidence="2">
    <location>
        <begin position="47"/>
        <end position="54"/>
    </location>
    <ligand>
        <name>ATP</name>
        <dbReference type="ChEBI" id="CHEBI:30616"/>
    </ligand>
</feature>
<name>RFCS4_MIMIV</name>
<organismHost>
    <name type="scientific">Acanthamoeba polyphaga</name>
    <name type="common">Amoeba</name>
    <dbReference type="NCBI Taxonomy" id="5757"/>
</organismHost>
<dbReference type="EMBL" id="AY653733">
    <property type="protein sequence ID" value="AAV50774.1"/>
    <property type="molecule type" value="Genomic_DNA"/>
</dbReference>
<dbReference type="SMR" id="Q5UQ72"/>
<dbReference type="KEGG" id="vg:9925141"/>
<dbReference type="OrthoDB" id="6135at10239"/>
<dbReference type="Proteomes" id="UP000001134">
    <property type="component" value="Genome"/>
</dbReference>
<dbReference type="GO" id="GO:0005524">
    <property type="term" value="F:ATP binding"/>
    <property type="evidence" value="ECO:0007669"/>
    <property type="project" value="UniProtKB-KW"/>
</dbReference>
<dbReference type="GO" id="GO:0016887">
    <property type="term" value="F:ATP hydrolysis activity"/>
    <property type="evidence" value="ECO:0007669"/>
    <property type="project" value="InterPro"/>
</dbReference>
<dbReference type="GO" id="GO:0003677">
    <property type="term" value="F:DNA binding"/>
    <property type="evidence" value="ECO:0007669"/>
    <property type="project" value="InterPro"/>
</dbReference>
<dbReference type="GO" id="GO:0003689">
    <property type="term" value="F:DNA clamp loader activity"/>
    <property type="evidence" value="ECO:0007669"/>
    <property type="project" value="TreeGrafter"/>
</dbReference>
<dbReference type="GO" id="GO:0006281">
    <property type="term" value="P:DNA repair"/>
    <property type="evidence" value="ECO:0007669"/>
    <property type="project" value="TreeGrafter"/>
</dbReference>
<dbReference type="GO" id="GO:0006261">
    <property type="term" value="P:DNA-templated DNA replication"/>
    <property type="evidence" value="ECO:0007669"/>
    <property type="project" value="TreeGrafter"/>
</dbReference>
<dbReference type="CDD" id="cd00009">
    <property type="entry name" value="AAA"/>
    <property type="match status" value="1"/>
</dbReference>
<dbReference type="CDD" id="cd18140">
    <property type="entry name" value="HLD_clamp_RFC"/>
    <property type="match status" value="1"/>
</dbReference>
<dbReference type="FunFam" id="3.40.50.300:FF:000952">
    <property type="entry name" value="Replication factor C subunit 2"/>
    <property type="match status" value="1"/>
</dbReference>
<dbReference type="Gene3D" id="1.10.8.60">
    <property type="match status" value="1"/>
</dbReference>
<dbReference type="Gene3D" id="1.20.272.10">
    <property type="match status" value="1"/>
</dbReference>
<dbReference type="Gene3D" id="3.40.50.300">
    <property type="entry name" value="P-loop containing nucleotide triphosphate hydrolases"/>
    <property type="match status" value="1"/>
</dbReference>
<dbReference type="InterPro" id="IPR003593">
    <property type="entry name" value="AAA+_ATPase"/>
</dbReference>
<dbReference type="InterPro" id="IPR003959">
    <property type="entry name" value="ATPase_AAA_core"/>
</dbReference>
<dbReference type="InterPro" id="IPR008921">
    <property type="entry name" value="DNA_pol3_clamp-load_cplx_C"/>
</dbReference>
<dbReference type="InterPro" id="IPR050238">
    <property type="entry name" value="DNA_Rep/Repair_Clamp_Loader"/>
</dbReference>
<dbReference type="InterPro" id="IPR027417">
    <property type="entry name" value="P-loop_NTPase"/>
</dbReference>
<dbReference type="InterPro" id="IPR013748">
    <property type="entry name" value="Rep_factorC_C"/>
</dbReference>
<dbReference type="InterPro" id="IPR047854">
    <property type="entry name" value="RFC_lid"/>
</dbReference>
<dbReference type="PANTHER" id="PTHR11669">
    <property type="entry name" value="REPLICATION FACTOR C / DNA POLYMERASE III GAMMA-TAU SUBUNIT"/>
    <property type="match status" value="1"/>
</dbReference>
<dbReference type="PANTHER" id="PTHR11669:SF20">
    <property type="entry name" value="REPLICATION FACTOR C SUBUNIT 4"/>
    <property type="match status" value="1"/>
</dbReference>
<dbReference type="Pfam" id="PF00004">
    <property type="entry name" value="AAA"/>
    <property type="match status" value="1"/>
</dbReference>
<dbReference type="Pfam" id="PF21960">
    <property type="entry name" value="RCF1-5-like_lid"/>
    <property type="match status" value="1"/>
</dbReference>
<dbReference type="Pfam" id="PF08542">
    <property type="entry name" value="Rep_fac_C"/>
    <property type="match status" value="1"/>
</dbReference>
<dbReference type="SMART" id="SM00382">
    <property type="entry name" value="AAA"/>
    <property type="match status" value="1"/>
</dbReference>
<dbReference type="SUPFAM" id="SSF52540">
    <property type="entry name" value="P-loop containing nucleoside triphosphate hydrolases"/>
    <property type="match status" value="1"/>
</dbReference>
<dbReference type="SUPFAM" id="SSF48019">
    <property type="entry name" value="post-AAA+ oligomerization domain-like"/>
    <property type="match status" value="1"/>
</dbReference>
<accession>Q5UQ72</accession>
<proteinExistence type="inferred from homology"/>
<comment type="function">
    <text evidence="1">Part of the RFC clamp loader complex which loads the PCNA sliding clamp onto DNA.</text>
</comment>
<comment type="similarity">
    <text evidence="3">Belongs to the activator 1 small subunits family. RfcS subfamily.</text>
</comment>
<reference key="1">
    <citation type="journal article" date="2004" name="Science">
        <title>The 1.2-megabase genome sequence of Mimivirus.</title>
        <authorList>
            <person name="Raoult D."/>
            <person name="Audic S."/>
            <person name="Robert C."/>
            <person name="Abergel C."/>
            <person name="Renesto P."/>
            <person name="Ogata H."/>
            <person name="La Scola B."/>
            <person name="Susan M."/>
            <person name="Claverie J.-M."/>
        </authorList>
    </citation>
    <scope>NUCLEOTIDE SEQUENCE [LARGE SCALE GENOMIC DNA]</scope>
    <source>
        <strain>Rowbotham-Bradford</strain>
    </source>
</reference>